<organism>
    <name type="scientific">Shewanella pealeana (strain ATCC 700345 / ANG-SQ1)</name>
    <dbReference type="NCBI Taxonomy" id="398579"/>
    <lineage>
        <taxon>Bacteria</taxon>
        <taxon>Pseudomonadati</taxon>
        <taxon>Pseudomonadota</taxon>
        <taxon>Gammaproteobacteria</taxon>
        <taxon>Alteromonadales</taxon>
        <taxon>Shewanellaceae</taxon>
        <taxon>Shewanella</taxon>
    </lineage>
</organism>
<accession>A8H6K5</accession>
<sequence length="153" mass="17271">MSNQLNTMDIKEILKFLPHRYPFLLIDRVLDFTPGETLHAIKNVTINEPFFQGHFPVQPVMPGVLILEAMAQATGLLAFKTMSEEPSNDALYYFAGIDKARFKRVVEPGDQLHFEVQMIKERRGIGVFTGVAKVDGEVVCSAEIMCARREISK</sequence>
<name>FABZ_SHEPA</name>
<reference key="1">
    <citation type="submission" date="2007-10" db="EMBL/GenBank/DDBJ databases">
        <title>Complete sequence of Shewanella pealeana ATCC 700345.</title>
        <authorList>
            <consortium name="US DOE Joint Genome Institute"/>
            <person name="Copeland A."/>
            <person name="Lucas S."/>
            <person name="Lapidus A."/>
            <person name="Barry K."/>
            <person name="Glavina del Rio T."/>
            <person name="Dalin E."/>
            <person name="Tice H."/>
            <person name="Pitluck S."/>
            <person name="Chertkov O."/>
            <person name="Brettin T."/>
            <person name="Bruce D."/>
            <person name="Detter J.C."/>
            <person name="Han C."/>
            <person name="Schmutz J."/>
            <person name="Larimer F."/>
            <person name="Land M."/>
            <person name="Hauser L."/>
            <person name="Kyrpides N."/>
            <person name="Kim E."/>
            <person name="Zhao J.-S.Z."/>
            <person name="Manno D."/>
            <person name="Hawari J."/>
            <person name="Richardson P."/>
        </authorList>
    </citation>
    <scope>NUCLEOTIDE SEQUENCE [LARGE SCALE GENOMIC DNA]</scope>
    <source>
        <strain>ATCC 700345 / ANG-SQ1</strain>
    </source>
</reference>
<proteinExistence type="inferred from homology"/>
<evidence type="ECO:0000255" key="1">
    <source>
        <dbReference type="HAMAP-Rule" id="MF_00406"/>
    </source>
</evidence>
<evidence type="ECO:0000305" key="2"/>
<feature type="chain" id="PRO_0000340800" description="3-hydroxyacyl-[acyl-carrier-protein] dehydratase FabZ">
    <location>
        <begin position="1"/>
        <end position="153"/>
    </location>
</feature>
<feature type="active site" evidence="1">
    <location>
        <position position="54"/>
    </location>
</feature>
<protein>
    <recommendedName>
        <fullName evidence="1">3-hydroxyacyl-[acyl-carrier-protein] dehydratase FabZ</fullName>
        <ecNumber evidence="1">4.2.1.59</ecNumber>
    </recommendedName>
    <alternativeName>
        <fullName evidence="1">(3R)-hydroxymyristoyl-[acyl-carrier-protein] dehydratase</fullName>
        <shortName evidence="1">(3R)-hydroxymyristoyl-ACP dehydrase</shortName>
    </alternativeName>
    <alternativeName>
        <fullName evidence="1">Beta-hydroxyacyl-ACP dehydratase</fullName>
    </alternativeName>
</protein>
<keyword id="KW-0963">Cytoplasm</keyword>
<keyword id="KW-0441">Lipid A biosynthesis</keyword>
<keyword id="KW-0444">Lipid biosynthesis</keyword>
<keyword id="KW-0443">Lipid metabolism</keyword>
<keyword id="KW-0456">Lyase</keyword>
<keyword id="KW-1185">Reference proteome</keyword>
<dbReference type="EC" id="4.2.1.59" evidence="1"/>
<dbReference type="EMBL" id="CP000851">
    <property type="protein sequence ID" value="ABV88192.1"/>
    <property type="status" value="ALT_INIT"/>
    <property type="molecule type" value="Genomic_DNA"/>
</dbReference>
<dbReference type="RefSeq" id="WP_041411562.1">
    <property type="nucleotide sequence ID" value="NC_009901.1"/>
</dbReference>
<dbReference type="SMR" id="A8H6K5"/>
<dbReference type="STRING" id="398579.Spea_2874"/>
<dbReference type="KEGG" id="spl:Spea_2874"/>
<dbReference type="eggNOG" id="COG0764">
    <property type="taxonomic scope" value="Bacteria"/>
</dbReference>
<dbReference type="HOGENOM" id="CLU_078912_1_0_6"/>
<dbReference type="OrthoDB" id="9772788at2"/>
<dbReference type="Proteomes" id="UP000002608">
    <property type="component" value="Chromosome"/>
</dbReference>
<dbReference type="GO" id="GO:0005737">
    <property type="term" value="C:cytoplasm"/>
    <property type="evidence" value="ECO:0007669"/>
    <property type="project" value="UniProtKB-SubCell"/>
</dbReference>
<dbReference type="GO" id="GO:0016020">
    <property type="term" value="C:membrane"/>
    <property type="evidence" value="ECO:0007669"/>
    <property type="project" value="GOC"/>
</dbReference>
<dbReference type="GO" id="GO:0019171">
    <property type="term" value="F:(3R)-hydroxyacyl-[acyl-carrier-protein] dehydratase activity"/>
    <property type="evidence" value="ECO:0007669"/>
    <property type="project" value="UniProtKB-EC"/>
</dbReference>
<dbReference type="GO" id="GO:0006633">
    <property type="term" value="P:fatty acid biosynthetic process"/>
    <property type="evidence" value="ECO:0007669"/>
    <property type="project" value="UniProtKB-UniRule"/>
</dbReference>
<dbReference type="GO" id="GO:0009245">
    <property type="term" value="P:lipid A biosynthetic process"/>
    <property type="evidence" value="ECO:0007669"/>
    <property type="project" value="UniProtKB-UniRule"/>
</dbReference>
<dbReference type="CDD" id="cd01288">
    <property type="entry name" value="FabZ"/>
    <property type="match status" value="1"/>
</dbReference>
<dbReference type="FunFam" id="3.10.129.10:FF:000001">
    <property type="entry name" value="3-hydroxyacyl-[acyl-carrier-protein] dehydratase FabZ"/>
    <property type="match status" value="1"/>
</dbReference>
<dbReference type="Gene3D" id="3.10.129.10">
    <property type="entry name" value="Hotdog Thioesterase"/>
    <property type="match status" value="1"/>
</dbReference>
<dbReference type="HAMAP" id="MF_00406">
    <property type="entry name" value="FabZ"/>
    <property type="match status" value="1"/>
</dbReference>
<dbReference type="InterPro" id="IPR013114">
    <property type="entry name" value="FabA_FabZ"/>
</dbReference>
<dbReference type="InterPro" id="IPR010084">
    <property type="entry name" value="FabZ"/>
</dbReference>
<dbReference type="InterPro" id="IPR029069">
    <property type="entry name" value="HotDog_dom_sf"/>
</dbReference>
<dbReference type="NCBIfam" id="TIGR01750">
    <property type="entry name" value="fabZ"/>
    <property type="match status" value="1"/>
</dbReference>
<dbReference type="NCBIfam" id="NF000582">
    <property type="entry name" value="PRK00006.1"/>
    <property type="match status" value="1"/>
</dbReference>
<dbReference type="PANTHER" id="PTHR30272">
    <property type="entry name" value="3-HYDROXYACYL-[ACYL-CARRIER-PROTEIN] DEHYDRATASE"/>
    <property type="match status" value="1"/>
</dbReference>
<dbReference type="PANTHER" id="PTHR30272:SF1">
    <property type="entry name" value="3-HYDROXYACYL-[ACYL-CARRIER-PROTEIN] DEHYDRATASE"/>
    <property type="match status" value="1"/>
</dbReference>
<dbReference type="Pfam" id="PF07977">
    <property type="entry name" value="FabA"/>
    <property type="match status" value="1"/>
</dbReference>
<dbReference type="SUPFAM" id="SSF54637">
    <property type="entry name" value="Thioesterase/thiol ester dehydrase-isomerase"/>
    <property type="match status" value="1"/>
</dbReference>
<gene>
    <name evidence="1" type="primary">fabZ</name>
    <name type="ordered locus">Spea_2874</name>
</gene>
<comment type="function">
    <text evidence="1">Involved in unsaturated fatty acids biosynthesis. Catalyzes the dehydration of short chain beta-hydroxyacyl-ACPs and long chain saturated and unsaturated beta-hydroxyacyl-ACPs.</text>
</comment>
<comment type="catalytic activity">
    <reaction evidence="1">
        <text>a (3R)-hydroxyacyl-[ACP] = a (2E)-enoyl-[ACP] + H2O</text>
        <dbReference type="Rhea" id="RHEA:13097"/>
        <dbReference type="Rhea" id="RHEA-COMP:9925"/>
        <dbReference type="Rhea" id="RHEA-COMP:9945"/>
        <dbReference type="ChEBI" id="CHEBI:15377"/>
        <dbReference type="ChEBI" id="CHEBI:78784"/>
        <dbReference type="ChEBI" id="CHEBI:78827"/>
        <dbReference type="EC" id="4.2.1.59"/>
    </reaction>
</comment>
<comment type="subcellular location">
    <subcellularLocation>
        <location evidence="1">Cytoplasm</location>
    </subcellularLocation>
</comment>
<comment type="similarity">
    <text evidence="1">Belongs to the thioester dehydratase family. FabZ subfamily.</text>
</comment>
<comment type="sequence caution" evidence="2">
    <conflict type="erroneous initiation">
        <sequence resource="EMBL-CDS" id="ABV88192"/>
    </conflict>
</comment>